<dbReference type="EMBL" id="U01047">
    <property type="status" value="NOT_ANNOTATED_CDS"/>
    <property type="molecule type" value="mRNA"/>
</dbReference>
<dbReference type="PIR" id="S41514">
    <property type="entry name" value="S41514"/>
</dbReference>
<dbReference type="RefSeq" id="XP_046763529.1">
    <property type="nucleotide sequence ID" value="XM_046907573.1"/>
</dbReference>
<dbReference type="RefSeq" id="XP_046763530.1">
    <property type="nucleotide sequence ID" value="XM_046907574.1"/>
</dbReference>
<dbReference type="SMR" id="P39022"/>
<dbReference type="FunCoup" id="P39022">
    <property type="interactions" value="1836"/>
</dbReference>
<dbReference type="STRING" id="9031.ENSGALP00000063584"/>
<dbReference type="PaxDb" id="9031-ENSGALP00000021180"/>
<dbReference type="GeneID" id="418152"/>
<dbReference type="VEuPathDB" id="HostDB:geneid_418152"/>
<dbReference type="eggNOG" id="KOG4141">
    <property type="taxonomic scope" value="Eukaryota"/>
</dbReference>
<dbReference type="InParanoid" id="P39022"/>
<dbReference type="OrthoDB" id="206565at2759"/>
<dbReference type="PhylomeDB" id="P39022"/>
<dbReference type="PRO" id="PR:P39022"/>
<dbReference type="Proteomes" id="UP000000539">
    <property type="component" value="Unassembled WGS sequence"/>
</dbReference>
<dbReference type="GO" id="GO:0005634">
    <property type="term" value="C:nucleus"/>
    <property type="evidence" value="ECO:0000318"/>
    <property type="project" value="GO_Central"/>
</dbReference>
<dbReference type="GO" id="GO:0003677">
    <property type="term" value="F:DNA binding"/>
    <property type="evidence" value="ECO:0007669"/>
    <property type="project" value="UniProtKB-KW"/>
</dbReference>
<dbReference type="GO" id="GO:0000730">
    <property type="term" value="P:DNA recombinase assembly"/>
    <property type="evidence" value="ECO:0007669"/>
    <property type="project" value="InterPro"/>
</dbReference>
<dbReference type="GO" id="GO:0000724">
    <property type="term" value="P:double-strand break repair via homologous recombination"/>
    <property type="evidence" value="ECO:0000318"/>
    <property type="project" value="GO_Central"/>
</dbReference>
<dbReference type="GO" id="GO:0045002">
    <property type="term" value="P:double-strand break repair via single-strand annealing"/>
    <property type="evidence" value="ECO:0000318"/>
    <property type="project" value="GO_Central"/>
</dbReference>
<dbReference type="GO" id="GO:0006312">
    <property type="term" value="P:mitotic recombination"/>
    <property type="evidence" value="ECO:0000318"/>
    <property type="project" value="GO_Central"/>
</dbReference>
<dbReference type="FunFam" id="3.30.390.80:FF:000001">
    <property type="entry name" value="DNA repair protein RAD52 homolog"/>
    <property type="match status" value="1"/>
</dbReference>
<dbReference type="Gene3D" id="3.30.390.80">
    <property type="entry name" value="DNA repair protein Rad52/59/22"/>
    <property type="match status" value="1"/>
</dbReference>
<dbReference type="InterPro" id="IPR004585">
    <property type="entry name" value="DNA_recomb/repair_Rad52"/>
</dbReference>
<dbReference type="InterPro" id="IPR041247">
    <property type="entry name" value="Rad52_fam"/>
</dbReference>
<dbReference type="InterPro" id="IPR007232">
    <property type="entry name" value="Rad52_Rad59_Rad22"/>
</dbReference>
<dbReference type="InterPro" id="IPR042525">
    <property type="entry name" value="Rad52_Rad59_Rad22_sf"/>
</dbReference>
<dbReference type="NCBIfam" id="TIGR00607">
    <property type="entry name" value="rad52"/>
    <property type="match status" value="1"/>
</dbReference>
<dbReference type="PANTHER" id="PTHR12132">
    <property type="entry name" value="DNA REPAIR AND RECOMBINATION PROTEIN RAD52, RAD59"/>
    <property type="match status" value="1"/>
</dbReference>
<dbReference type="PANTHER" id="PTHR12132:SF1">
    <property type="entry name" value="DNA REPAIR PROTEIN RAD52 HOMOLOG"/>
    <property type="match status" value="1"/>
</dbReference>
<dbReference type="Pfam" id="PF04098">
    <property type="entry name" value="Rad52_Rad22"/>
    <property type="match status" value="1"/>
</dbReference>
<dbReference type="SUPFAM" id="SSF54768">
    <property type="entry name" value="dsRNA-binding domain-like"/>
    <property type="match status" value="1"/>
</dbReference>
<feature type="chain" id="PRO_0000173883" description="DNA repair protein RAD52 homolog">
    <location>
        <begin position="1"/>
        <end position="422"/>
    </location>
</feature>
<feature type="DNA-binding region" evidence="1">
    <location>
        <begin position="153"/>
        <end position="157"/>
    </location>
</feature>
<feature type="region of interest" description="Disordered" evidence="2">
    <location>
        <begin position="1"/>
        <end position="21"/>
    </location>
</feature>
<feature type="region of interest" description="Disordered" evidence="2">
    <location>
        <begin position="228"/>
        <end position="255"/>
    </location>
</feature>
<feature type="region of interest" description="Disordered" evidence="2">
    <location>
        <begin position="281"/>
        <end position="306"/>
    </location>
</feature>
<feature type="region of interest" description="Disordered" evidence="2">
    <location>
        <begin position="343"/>
        <end position="422"/>
    </location>
</feature>
<feature type="compositionally biased region" description="Basic and acidic residues" evidence="2">
    <location>
        <begin position="1"/>
        <end position="11"/>
    </location>
</feature>
<feature type="compositionally biased region" description="Low complexity" evidence="2">
    <location>
        <begin position="12"/>
        <end position="21"/>
    </location>
</feature>
<feature type="compositionally biased region" description="Basic and acidic residues" evidence="2">
    <location>
        <begin position="230"/>
        <end position="242"/>
    </location>
</feature>
<feature type="compositionally biased region" description="Polar residues" evidence="2">
    <location>
        <begin position="243"/>
        <end position="252"/>
    </location>
</feature>
<feature type="compositionally biased region" description="Basic residues" evidence="2">
    <location>
        <begin position="357"/>
        <end position="378"/>
    </location>
</feature>
<feature type="compositionally biased region" description="Polar residues" evidence="2">
    <location>
        <begin position="384"/>
        <end position="401"/>
    </location>
</feature>
<feature type="compositionally biased region" description="Basic residues" evidence="2">
    <location>
        <begin position="412"/>
        <end position="422"/>
    </location>
</feature>
<keyword id="KW-0227">DNA damage</keyword>
<keyword id="KW-0233">DNA recombination</keyword>
<keyword id="KW-0234">DNA repair</keyword>
<keyword id="KW-0238">DNA-binding</keyword>
<keyword id="KW-0539">Nucleus</keyword>
<keyword id="KW-1185">Reference proteome</keyword>
<sequence>MPERQGKDSESHVSSSCTSTSNSVACFGQYQYTANEYQAIQHALRQKLGPEYISSRQAGGGQKVCYIEGHKVISLANEMFGFNGWAHSVTQQNVDFVDLNNGRFYVGVCAFVKVQLKDGSYHEDVGYGVSEGLKSKALSLEKARKEAVTDGLKRALKCFGNALGNCILDKDYLQAVNKLPRQMPPELDLVKTKRQDYEPEIEKARYDGCLERQNPGWRQQCEMAPTCKPTHTEASRVTEDQKQPSSSGNTDSPAVECDATYQRKLRQKQLQQQFWEQMEKRRQVKEVTPSSKQATANPPVKHSTPAAVQQELAIEEEFFADDLELWDISLETTDLNKLMCHKAAGSPAAQQPPETPHRRHQMTTRNRTPQRMHYHKPPVRFAQLQPSAALTSNSHGANQRTPAEHSPYRRSQSWKKRRLEPT</sequence>
<protein>
    <recommendedName>
        <fullName>DNA repair protein RAD52 homolog</fullName>
    </recommendedName>
</protein>
<accession>P39022</accession>
<organism>
    <name type="scientific">Gallus gallus</name>
    <name type="common">Chicken</name>
    <dbReference type="NCBI Taxonomy" id="9031"/>
    <lineage>
        <taxon>Eukaryota</taxon>
        <taxon>Metazoa</taxon>
        <taxon>Chordata</taxon>
        <taxon>Craniata</taxon>
        <taxon>Vertebrata</taxon>
        <taxon>Euteleostomi</taxon>
        <taxon>Archelosauria</taxon>
        <taxon>Archosauria</taxon>
        <taxon>Dinosauria</taxon>
        <taxon>Saurischia</taxon>
        <taxon>Theropoda</taxon>
        <taxon>Coelurosauria</taxon>
        <taxon>Aves</taxon>
        <taxon>Neognathae</taxon>
        <taxon>Galloanserae</taxon>
        <taxon>Galliformes</taxon>
        <taxon>Phasianidae</taxon>
        <taxon>Phasianinae</taxon>
        <taxon>Gallus</taxon>
    </lineage>
</organism>
<gene>
    <name type="primary">RAD52</name>
</gene>
<evidence type="ECO:0000250" key="1"/>
<evidence type="ECO:0000256" key="2">
    <source>
        <dbReference type="SAM" id="MobiDB-lite"/>
    </source>
</evidence>
<evidence type="ECO:0000305" key="3"/>
<proteinExistence type="evidence at transcript level"/>
<comment type="function">
    <text evidence="1">Involved in double-stranded break repair. Plays a central role in genetic recombination and DNA repair by promoting the annealing of complementary single-stranded DNA and by stimulation of the RAD51 recombinase (By similarity).</text>
</comment>
<comment type="subunit">
    <text evidence="1">The full-length protein forms heptameric rings.</text>
</comment>
<comment type="subcellular location">
    <subcellularLocation>
        <location evidence="3">Nucleus</location>
    </subcellularLocation>
</comment>
<comment type="similarity">
    <text evidence="3">Belongs to the RAD52 family.</text>
</comment>
<name>RAD52_CHICK</name>
<reference key="1">
    <citation type="journal article" date="1993" name="Nucleic Acids Res.">
        <title>Identification of a chicken RAD52 homologue suggests conservation of the RAD52 recombination pathway throughout the evolution of higher eukaryotes.</title>
        <authorList>
            <person name="Bezzubova O.Y."/>
            <person name="Schmidt H."/>
            <person name="Ostermann K."/>
            <person name="Heyer W.-D."/>
            <person name="Buerstedde J.-M."/>
        </authorList>
    </citation>
    <scope>NUCLEOTIDE SEQUENCE [MRNA]</scope>
    <source>
        <tissue>Testis</tissue>
    </source>
</reference>